<evidence type="ECO:0000255" key="1">
    <source>
        <dbReference type="HAMAP-Rule" id="MF_01363"/>
    </source>
</evidence>
<evidence type="ECO:0000305" key="2"/>
<proteinExistence type="inferred from homology"/>
<sequence length="104" mass="11560">MYAIIETGGKQYWVKPGQNLQVERLNAEVGANVEVKVLWANDAEGTSADAKAGTDSAKVTAQVVRHLRGKKIIIFKKRPKKGYERTQGHRQDLSEIKITDIKIG</sequence>
<organism>
    <name type="scientific">Elusimicrobium minutum (strain Pei191)</name>
    <dbReference type="NCBI Taxonomy" id="445932"/>
    <lineage>
        <taxon>Bacteria</taxon>
        <taxon>Pseudomonadati</taxon>
        <taxon>Elusimicrobiota</taxon>
        <taxon>Elusimicrobia</taxon>
        <taxon>Elusimicrobiales</taxon>
        <taxon>Elusimicrobiaceae</taxon>
        <taxon>Elusimicrobium</taxon>
    </lineage>
</organism>
<accession>B2KAW0</accession>
<keyword id="KW-1185">Reference proteome</keyword>
<keyword id="KW-0687">Ribonucleoprotein</keyword>
<keyword id="KW-0689">Ribosomal protein</keyword>
<keyword id="KW-0694">RNA-binding</keyword>
<keyword id="KW-0699">rRNA-binding</keyword>
<reference key="1">
    <citation type="journal article" date="2009" name="Appl. Environ. Microbiol.">
        <title>Genomic analysis of 'Elusimicrobium minutum,' the first cultivated representative of the phylum 'Elusimicrobia' (formerly termite group 1).</title>
        <authorList>
            <person name="Herlemann D.P.R."/>
            <person name="Geissinger O."/>
            <person name="Ikeda-Ohtsubo W."/>
            <person name="Kunin V."/>
            <person name="Sun H."/>
            <person name="Lapidus A."/>
            <person name="Hugenholtz P."/>
            <person name="Brune A."/>
        </authorList>
    </citation>
    <scope>NUCLEOTIDE SEQUENCE [LARGE SCALE GENOMIC DNA]</scope>
    <source>
        <strain>Pei191</strain>
    </source>
</reference>
<feature type="chain" id="PRO_1000143796" description="Large ribosomal subunit protein bL21">
    <location>
        <begin position="1"/>
        <end position="104"/>
    </location>
</feature>
<name>RL21_ELUMP</name>
<comment type="function">
    <text evidence="1">This protein binds to 23S rRNA in the presence of protein L20.</text>
</comment>
<comment type="subunit">
    <text evidence="1">Part of the 50S ribosomal subunit. Contacts protein L20.</text>
</comment>
<comment type="similarity">
    <text evidence="1">Belongs to the bacterial ribosomal protein bL21 family.</text>
</comment>
<protein>
    <recommendedName>
        <fullName evidence="1">Large ribosomal subunit protein bL21</fullName>
    </recommendedName>
    <alternativeName>
        <fullName evidence="2">50S ribosomal protein L21</fullName>
    </alternativeName>
</protein>
<gene>
    <name evidence="1" type="primary">rplU</name>
    <name type="ordered locus">Emin_0090</name>
</gene>
<dbReference type="EMBL" id="CP001055">
    <property type="protein sequence ID" value="ACC97656.1"/>
    <property type="molecule type" value="Genomic_DNA"/>
</dbReference>
<dbReference type="RefSeq" id="WP_012414271.1">
    <property type="nucleotide sequence ID" value="NC_010644.1"/>
</dbReference>
<dbReference type="SMR" id="B2KAW0"/>
<dbReference type="STRING" id="445932.Emin_0090"/>
<dbReference type="KEGG" id="emi:Emin_0090"/>
<dbReference type="HOGENOM" id="CLU_061463_3_2_0"/>
<dbReference type="OrthoDB" id="9813334at2"/>
<dbReference type="Proteomes" id="UP000001029">
    <property type="component" value="Chromosome"/>
</dbReference>
<dbReference type="GO" id="GO:0005737">
    <property type="term" value="C:cytoplasm"/>
    <property type="evidence" value="ECO:0007669"/>
    <property type="project" value="UniProtKB-ARBA"/>
</dbReference>
<dbReference type="GO" id="GO:1990904">
    <property type="term" value="C:ribonucleoprotein complex"/>
    <property type="evidence" value="ECO:0007669"/>
    <property type="project" value="UniProtKB-KW"/>
</dbReference>
<dbReference type="GO" id="GO:0005840">
    <property type="term" value="C:ribosome"/>
    <property type="evidence" value="ECO:0007669"/>
    <property type="project" value="UniProtKB-KW"/>
</dbReference>
<dbReference type="GO" id="GO:0019843">
    <property type="term" value="F:rRNA binding"/>
    <property type="evidence" value="ECO:0007669"/>
    <property type="project" value="UniProtKB-UniRule"/>
</dbReference>
<dbReference type="GO" id="GO:0003735">
    <property type="term" value="F:structural constituent of ribosome"/>
    <property type="evidence" value="ECO:0007669"/>
    <property type="project" value="InterPro"/>
</dbReference>
<dbReference type="GO" id="GO:0006412">
    <property type="term" value="P:translation"/>
    <property type="evidence" value="ECO:0007669"/>
    <property type="project" value="UniProtKB-UniRule"/>
</dbReference>
<dbReference type="HAMAP" id="MF_01363">
    <property type="entry name" value="Ribosomal_bL21"/>
    <property type="match status" value="1"/>
</dbReference>
<dbReference type="InterPro" id="IPR028909">
    <property type="entry name" value="bL21-like"/>
</dbReference>
<dbReference type="InterPro" id="IPR036164">
    <property type="entry name" value="bL21-like_sf"/>
</dbReference>
<dbReference type="InterPro" id="IPR001787">
    <property type="entry name" value="Ribosomal_bL21"/>
</dbReference>
<dbReference type="InterPro" id="IPR018258">
    <property type="entry name" value="Ribosomal_bL21_CS"/>
</dbReference>
<dbReference type="NCBIfam" id="TIGR00061">
    <property type="entry name" value="L21"/>
    <property type="match status" value="1"/>
</dbReference>
<dbReference type="PANTHER" id="PTHR21349">
    <property type="entry name" value="50S RIBOSOMAL PROTEIN L21"/>
    <property type="match status" value="1"/>
</dbReference>
<dbReference type="PANTHER" id="PTHR21349:SF0">
    <property type="entry name" value="LARGE RIBOSOMAL SUBUNIT PROTEIN BL21M"/>
    <property type="match status" value="1"/>
</dbReference>
<dbReference type="Pfam" id="PF00829">
    <property type="entry name" value="Ribosomal_L21p"/>
    <property type="match status" value="1"/>
</dbReference>
<dbReference type="SUPFAM" id="SSF141091">
    <property type="entry name" value="L21p-like"/>
    <property type="match status" value="1"/>
</dbReference>
<dbReference type="PROSITE" id="PS01169">
    <property type="entry name" value="RIBOSOMAL_L21"/>
    <property type="match status" value="1"/>
</dbReference>